<keyword id="KW-0349">Heme</keyword>
<keyword id="KW-0408">Iron</keyword>
<keyword id="KW-0479">Metal-binding</keyword>
<keyword id="KW-0503">Monooxygenase</keyword>
<keyword id="KW-0560">Oxidoreductase</keyword>
<keyword id="KW-1185">Reference proteome</keyword>
<keyword id="KW-0732">Signal</keyword>
<proteinExistence type="evidence at protein level"/>
<reference key="1">
    <citation type="journal article" date="2012" name="PLoS Genet.">
        <title>Precocious metamorphosis in the juvenile hormone-deficient mutant of the silkworm, Bombyx mori.</title>
        <authorList>
            <person name="Daimon T."/>
            <person name="Kozaki T."/>
            <person name="Niwa R."/>
            <person name="Kobayashi I."/>
            <person name="Furuta K."/>
            <person name="Namiki T."/>
            <person name="Uchino K."/>
            <person name="Banno Y."/>
            <person name="Katsuma S."/>
            <person name="Tamura T."/>
            <person name="Mita K."/>
            <person name="Sezutsu H."/>
            <person name="Nakayama M."/>
            <person name="Itoyama K."/>
            <person name="Shimada T."/>
            <person name="Shinoda T."/>
        </authorList>
    </citation>
    <scope>NUCLEOTIDE SEQUENCE [MRNA]</scope>
    <scope>FUNCTION</scope>
    <scope>CATALYTIC ACTIVITY</scope>
    <scope>TISSUE SPECIFICITY</scope>
    <scope>DISRUPTION PHENOTYPE</scope>
    <source>
        <strain>Kinshu X Showa</strain>
        <tissue>Corpora allata</tissue>
    </source>
</reference>
<reference key="2">
    <citation type="journal article" date="2008" name="Insect Biochem. Mol. Biol.">
        <title>The genome of a lepidopteran model insect, the silkworm Bombyx mori.</title>
        <authorList>
            <consortium name="International Silkworm Genome Consortium"/>
        </authorList>
    </citation>
    <scope>NUCLEOTIDE SEQUENCE [LARGE SCALE GENOMIC DNA]</scope>
    <source>
        <strain>p50T</strain>
    </source>
</reference>
<accession>C0SPF7</accession>
<accession>H9JQA2</accession>
<accession>L0N4L5</accession>
<accession>L0N734</accession>
<accession>L0N7A3</accession>
<feature type="signal peptide" evidence="2">
    <location>
        <begin position="1"/>
        <end position="24"/>
    </location>
</feature>
<feature type="chain" id="PRO_0000433621" description="Farnesoate epoxidase" evidence="2">
    <location>
        <begin position="25"/>
        <end position="493"/>
    </location>
</feature>
<feature type="binding site" description="axial binding residue" evidence="1">
    <location>
        <position position="433"/>
    </location>
    <ligand>
        <name>heme</name>
        <dbReference type="ChEBI" id="CHEBI:30413"/>
    </ligand>
    <ligandPart>
        <name>Fe</name>
        <dbReference type="ChEBI" id="CHEBI:18248"/>
    </ligandPart>
</feature>
<feature type="sequence conflict" description="In Ref. 1; BAM73840." evidence="5" ref="1">
    <original>V</original>
    <variation>A</variation>
    <location>
        <position position="6"/>
    </location>
</feature>
<feature type="sequence conflict" description="In Ref. 1; BAH47266/BAM73839/BAM73840/BAM73841." ref="1">
    <original>D</original>
    <variation>E</variation>
    <location>
        <position position="148"/>
    </location>
</feature>
<feature type="sequence conflict" description="In Ref. 1; BAH47266/BAM73839/BAM73840/BAM73841." ref="1">
    <original>E</original>
    <variation>K</variation>
    <location>
        <position position="197"/>
    </location>
</feature>
<feature type="sequence conflict" description="In Ref. 1; BAH47266/BAM73839/BAM73840/BAM73841." ref="1">
    <original>F</original>
    <variation>I</variation>
    <location>
        <position position="215"/>
    </location>
</feature>
<feature type="sequence conflict" description="In Ref. 1; BAH47266/BAM73839/BAM73840/BAM73841." ref="1">
    <original>P</original>
    <variation>L</variation>
    <location>
        <position position="281"/>
    </location>
</feature>
<feature type="sequence conflict" description="In Ref. 1; BAH47266/BAM73839/BAM73840/BAM73841." ref="1">
    <original>P</original>
    <variation>H</variation>
    <location>
        <position position="336"/>
    </location>
</feature>
<sequence length="493" mass="57206">MLALIVLCFILFFYIISRRHRGLCYPPGPTPLPIVGNLLSVLWESRKFKCHHLIWQSWSQKYGNLLGLRLGSINVVVVTGIELIREVSNREVFEGRPDGFFYTMRSFGKKLGLVFSDGPTWHRTRRFVLKYLKNFGYNSRFMNVYIGDECEALVQLRLADAGEPILVNQMFHITIVNILWRLVAGKRYDLEDQRLKELCSLVMRLFKLVDMSGGFLNFLPFLRHFVPRLIGFTELQEIHNALHQYLREIIKEHQENLQLGAPKDVIDAFLIDMLESQDDKPTLDDLQVVCLDLLEAGMETVTNTAVFMLLHVVRNEDVQRKLHQEIDDIIGRDRNPLLDDRIRMVYTEAVILETLRISTVASMGIPHMALNDAKLGNYIIPKGTFILLSLYELHHGPHWKDPETFRPERFLTKEGNILQDEWLIPFGIGKRRCIGEGLARSELFMFLTHILQKFHLRIPKNEPLPSTEPIDGLSLSAKQFRIIFEPRKTFKSI</sequence>
<organism>
    <name type="scientific">Bombyx mori</name>
    <name type="common">Silk moth</name>
    <dbReference type="NCBI Taxonomy" id="7091"/>
    <lineage>
        <taxon>Eukaryota</taxon>
        <taxon>Metazoa</taxon>
        <taxon>Ecdysozoa</taxon>
        <taxon>Arthropoda</taxon>
        <taxon>Hexapoda</taxon>
        <taxon>Insecta</taxon>
        <taxon>Pterygota</taxon>
        <taxon>Neoptera</taxon>
        <taxon>Endopterygota</taxon>
        <taxon>Lepidoptera</taxon>
        <taxon>Glossata</taxon>
        <taxon>Ditrysia</taxon>
        <taxon>Bombycoidea</taxon>
        <taxon>Bombycidae</taxon>
        <taxon>Bombycinae</taxon>
        <taxon>Bombyx</taxon>
    </lineage>
</organism>
<dbReference type="EC" id="1.14.14.128" evidence="3"/>
<dbReference type="EMBL" id="AB124839">
    <property type="protein sequence ID" value="BAH47266.1"/>
    <property type="molecule type" value="mRNA"/>
</dbReference>
<dbReference type="EMBL" id="AK289312">
    <property type="protein sequence ID" value="BAM73839.1"/>
    <property type="molecule type" value="mRNA"/>
</dbReference>
<dbReference type="EMBL" id="AK289313">
    <property type="protein sequence ID" value="BAM73840.1"/>
    <property type="molecule type" value="mRNA"/>
</dbReference>
<dbReference type="EMBL" id="AK289314">
    <property type="protein sequence ID" value="BAM73841.1"/>
    <property type="molecule type" value="mRNA"/>
</dbReference>
<dbReference type="RefSeq" id="NP_001140197.1">
    <property type="nucleotide sequence ID" value="NM_001146725.1"/>
</dbReference>
<dbReference type="SMR" id="C0SPF7"/>
<dbReference type="FunCoup" id="C0SPF7">
    <property type="interactions" value="12"/>
</dbReference>
<dbReference type="STRING" id="7091.C0SPF7"/>
<dbReference type="PaxDb" id="7091-BGIBMGA011708-TA"/>
<dbReference type="GeneID" id="100286798"/>
<dbReference type="KEGG" id="bmor:100286798"/>
<dbReference type="CTD" id="100286798"/>
<dbReference type="eggNOG" id="KOG0156">
    <property type="taxonomic scope" value="Eukaryota"/>
</dbReference>
<dbReference type="HOGENOM" id="CLU_001570_22_3_1"/>
<dbReference type="InParanoid" id="C0SPF7"/>
<dbReference type="OrthoDB" id="549794at7088"/>
<dbReference type="BRENDA" id="1.14.14.128">
    <property type="organism ID" value="890"/>
</dbReference>
<dbReference type="Proteomes" id="UP000005204">
    <property type="component" value="Unassembled WGS sequence"/>
</dbReference>
<dbReference type="GO" id="GO:0005737">
    <property type="term" value="C:cytoplasm"/>
    <property type="evidence" value="ECO:0007669"/>
    <property type="project" value="TreeGrafter"/>
</dbReference>
<dbReference type="GO" id="GO:0043231">
    <property type="term" value="C:intracellular membrane-bounded organelle"/>
    <property type="evidence" value="ECO:0007669"/>
    <property type="project" value="TreeGrafter"/>
</dbReference>
<dbReference type="GO" id="GO:0120512">
    <property type="term" value="F:farnesoate epoxidase activity"/>
    <property type="evidence" value="ECO:0007669"/>
    <property type="project" value="UniProtKB-EC"/>
</dbReference>
<dbReference type="GO" id="GO:0020037">
    <property type="term" value="F:heme binding"/>
    <property type="evidence" value="ECO:0007669"/>
    <property type="project" value="InterPro"/>
</dbReference>
<dbReference type="GO" id="GO:0005506">
    <property type="term" value="F:iron ion binding"/>
    <property type="evidence" value="ECO:0007669"/>
    <property type="project" value="InterPro"/>
</dbReference>
<dbReference type="GO" id="GO:0016709">
    <property type="term" value="F:oxidoreductase activity, acting on paired donors, with incorporation or reduction of molecular oxygen, NAD(P)H as one donor, and incorporation of one atom of oxygen"/>
    <property type="evidence" value="ECO:0000314"/>
    <property type="project" value="UniProtKB"/>
</dbReference>
<dbReference type="GO" id="GO:0008395">
    <property type="term" value="F:steroid hydroxylase activity"/>
    <property type="evidence" value="ECO:0007669"/>
    <property type="project" value="TreeGrafter"/>
</dbReference>
<dbReference type="GO" id="GO:0006718">
    <property type="term" value="P:juvenile hormone biosynthetic process"/>
    <property type="evidence" value="ECO:0000314"/>
    <property type="project" value="UniProtKB"/>
</dbReference>
<dbReference type="GO" id="GO:0007552">
    <property type="term" value="P:metamorphosis"/>
    <property type="evidence" value="ECO:0000315"/>
    <property type="project" value="UniProtKB"/>
</dbReference>
<dbReference type="GO" id="GO:0006082">
    <property type="term" value="P:organic acid metabolic process"/>
    <property type="evidence" value="ECO:0007669"/>
    <property type="project" value="TreeGrafter"/>
</dbReference>
<dbReference type="GO" id="GO:0006805">
    <property type="term" value="P:xenobiotic metabolic process"/>
    <property type="evidence" value="ECO:0007669"/>
    <property type="project" value="TreeGrafter"/>
</dbReference>
<dbReference type="CDD" id="cd20651">
    <property type="entry name" value="CYP15A1-like"/>
    <property type="match status" value="1"/>
</dbReference>
<dbReference type="FunFam" id="1.10.630.10:FF:000078">
    <property type="entry name" value="Probable cytochrome P450 515A1"/>
    <property type="match status" value="1"/>
</dbReference>
<dbReference type="Gene3D" id="1.10.630.10">
    <property type="entry name" value="Cytochrome P450"/>
    <property type="match status" value="1"/>
</dbReference>
<dbReference type="InterPro" id="IPR001128">
    <property type="entry name" value="Cyt_P450"/>
</dbReference>
<dbReference type="InterPro" id="IPR017972">
    <property type="entry name" value="Cyt_P450_CS"/>
</dbReference>
<dbReference type="InterPro" id="IPR002401">
    <property type="entry name" value="Cyt_P450_E_grp-I"/>
</dbReference>
<dbReference type="InterPro" id="IPR036396">
    <property type="entry name" value="Cyt_P450_sf"/>
</dbReference>
<dbReference type="InterPro" id="IPR050182">
    <property type="entry name" value="Cytochrome_P450_fam2"/>
</dbReference>
<dbReference type="PANTHER" id="PTHR24300:SF376">
    <property type="entry name" value="CYTOCHROME P450 15A1"/>
    <property type="match status" value="1"/>
</dbReference>
<dbReference type="PANTHER" id="PTHR24300">
    <property type="entry name" value="CYTOCHROME P450 508A4-RELATED"/>
    <property type="match status" value="1"/>
</dbReference>
<dbReference type="Pfam" id="PF00067">
    <property type="entry name" value="p450"/>
    <property type="match status" value="1"/>
</dbReference>
<dbReference type="PRINTS" id="PR00463">
    <property type="entry name" value="EP450I"/>
</dbReference>
<dbReference type="PRINTS" id="PR00385">
    <property type="entry name" value="P450"/>
</dbReference>
<dbReference type="SUPFAM" id="SSF48264">
    <property type="entry name" value="Cytochrome P450"/>
    <property type="match status" value="1"/>
</dbReference>
<dbReference type="PROSITE" id="PS00086">
    <property type="entry name" value="CYTOCHROME_P450"/>
    <property type="match status" value="1"/>
</dbReference>
<name>C15C1_BOMMO</name>
<protein>
    <recommendedName>
        <fullName evidence="5">Farnesoate epoxidase</fullName>
        <ecNumber evidence="3">1.14.14.128</ecNumber>
    </recommendedName>
    <alternativeName>
        <fullName evidence="4">Cytochrome P450 15C1</fullName>
    </alternativeName>
    <alternativeName>
        <fullName evidence="4">Protein dimolting</fullName>
        <shortName evidence="4">mod</shortName>
    </alternativeName>
</protein>
<evidence type="ECO:0000250" key="1">
    <source>
        <dbReference type="UniProtKB" id="P04798"/>
    </source>
</evidence>
<evidence type="ECO:0000255" key="2"/>
<evidence type="ECO:0000269" key="3">
    <source>
    </source>
</evidence>
<evidence type="ECO:0000303" key="4">
    <source>
    </source>
</evidence>
<evidence type="ECO:0000305" key="5"/>
<gene>
    <name evidence="4" type="primary">CYP15C1</name>
    <name type="ORF">BGIBMGA011708</name>
</gene>
<comment type="function">
    <text evidence="3">Catalyzes the conversion of farnesoate to juvenile hormone III acid in juvenile hormone biosynthesis.</text>
</comment>
<comment type="catalytic activity">
    <reaction evidence="3">
        <text>(2E,6E)-farnesoate + reduced [NADPH--hemoprotein reductase] + O2 = juvenile hormone III carboxylate + oxidized [NADPH--hemoprotein reductase] + H2O + H(+)</text>
        <dbReference type="Rhea" id="RHEA:43724"/>
        <dbReference type="Rhea" id="RHEA-COMP:11964"/>
        <dbReference type="Rhea" id="RHEA-COMP:11965"/>
        <dbReference type="ChEBI" id="CHEBI:15377"/>
        <dbReference type="ChEBI" id="CHEBI:15378"/>
        <dbReference type="ChEBI" id="CHEBI:15379"/>
        <dbReference type="ChEBI" id="CHEBI:57618"/>
        <dbReference type="ChEBI" id="CHEBI:58210"/>
        <dbReference type="ChEBI" id="CHEBI:83274"/>
        <dbReference type="ChEBI" id="CHEBI:83276"/>
        <dbReference type="EC" id="1.14.14.128"/>
    </reaction>
</comment>
<comment type="cofactor">
    <cofactor evidence="1">
        <name>heme</name>
        <dbReference type="ChEBI" id="CHEBI:30413"/>
    </cofactor>
</comment>
<comment type="tissue specificity">
    <text evidence="3">constitutively expressed in corpora allata from the first instar larval to adult stages.</text>
</comment>
<comment type="disruption phenotype">
    <text evidence="3">Larvae undergo precocious metamorphosis in the third (dimolter) or fourth instar (trimolter).</text>
</comment>
<comment type="miscellaneous">
    <text evidence="5">The enzyme is specifically found in lepidoptera (moths and butterflies) and is specific for farnesoate. Other insects contain the methyl farnesoate epoxidase, which is specific for methyl farnesoate.</text>
</comment>
<comment type="similarity">
    <text evidence="5">Belongs to the cytochrome P450 family.</text>
</comment>